<proteinExistence type="inferred from homology"/>
<protein>
    <recommendedName>
        <fullName evidence="1">2,3,4,5-tetrahydropyridine-2,6-dicarboxylate N-succinyltransferase</fullName>
        <ecNumber evidence="1">2.3.1.117</ecNumber>
    </recommendedName>
    <alternativeName>
        <fullName evidence="1">Tetrahydrodipicolinate N-succinyltransferase</fullName>
        <shortName evidence="1">THDP succinyltransferase</shortName>
        <shortName evidence="1">THP succinyltransferase</shortName>
        <shortName evidence="1">Tetrahydropicolinate succinylase</shortName>
    </alternativeName>
</protein>
<evidence type="ECO:0000255" key="1">
    <source>
        <dbReference type="HAMAP-Rule" id="MF_00811"/>
    </source>
</evidence>
<name>DAPD_ROSDO</name>
<organism>
    <name type="scientific">Roseobacter denitrificans (strain ATCC 33942 / OCh 114)</name>
    <name type="common">Erythrobacter sp. (strain OCh 114)</name>
    <name type="synonym">Roseobacter denitrificans</name>
    <dbReference type="NCBI Taxonomy" id="375451"/>
    <lineage>
        <taxon>Bacteria</taxon>
        <taxon>Pseudomonadati</taxon>
        <taxon>Pseudomonadota</taxon>
        <taxon>Alphaproteobacteria</taxon>
        <taxon>Rhodobacterales</taxon>
        <taxon>Roseobacteraceae</taxon>
        <taxon>Roseobacter</taxon>
    </lineage>
</organism>
<comment type="catalytic activity">
    <reaction evidence="1">
        <text>(S)-2,3,4,5-tetrahydrodipicolinate + succinyl-CoA + H2O = (S)-2-succinylamino-6-oxoheptanedioate + CoA</text>
        <dbReference type="Rhea" id="RHEA:17325"/>
        <dbReference type="ChEBI" id="CHEBI:15377"/>
        <dbReference type="ChEBI" id="CHEBI:15685"/>
        <dbReference type="ChEBI" id="CHEBI:16845"/>
        <dbReference type="ChEBI" id="CHEBI:57287"/>
        <dbReference type="ChEBI" id="CHEBI:57292"/>
        <dbReference type="EC" id="2.3.1.117"/>
    </reaction>
</comment>
<comment type="pathway">
    <text evidence="1">Amino-acid biosynthesis; L-lysine biosynthesis via DAP pathway; LL-2,6-diaminopimelate from (S)-tetrahydrodipicolinate (succinylase route): step 1/3.</text>
</comment>
<comment type="subunit">
    <text evidence="1">Homotrimer.</text>
</comment>
<comment type="subcellular location">
    <subcellularLocation>
        <location evidence="1">Cytoplasm</location>
    </subcellularLocation>
</comment>
<comment type="similarity">
    <text evidence="1">Belongs to the transferase hexapeptide repeat family.</text>
</comment>
<feature type="chain" id="PRO_1000047179" description="2,3,4,5-tetrahydropyridine-2,6-dicarboxylate N-succinyltransferase">
    <location>
        <begin position="1"/>
        <end position="275"/>
    </location>
</feature>
<feature type="binding site" evidence="1">
    <location>
        <position position="108"/>
    </location>
    <ligand>
        <name>substrate</name>
    </ligand>
</feature>
<feature type="binding site" evidence="1">
    <location>
        <position position="145"/>
    </location>
    <ligand>
        <name>substrate</name>
    </ligand>
</feature>
<sequence>MSNAELETAIEAAWEARDSISPATKGAERDAIEATLAALDGGGLRVAERQADGNWHVNQWAKKAVLLGFRIKDMEMQSGGAQGGGWWDKVDSKFAGWGEADWKDAGFRAVPNCVVRKSAYIAPGVVLMPSFVNLGAYVDEGTMVDTWATVGSCAQIGKNVHLSGGVGIGGVLEPMQAGPTIIEDNCFIGARSEVVEGCIVREGSVLGMGVFIGKSTKIVDRETGEFTYGEVPAGSVVVAGSMPSKNGVNLYCAVIVKKVDAQTRSKTSINELLRD</sequence>
<accession>Q16DM5</accession>
<reference key="1">
    <citation type="journal article" date="2007" name="J. Bacteriol.">
        <title>The complete genome sequence of Roseobacter denitrificans reveals a mixotrophic rather than photosynthetic metabolism.</title>
        <authorList>
            <person name="Swingley W.D."/>
            <person name="Sadekar S."/>
            <person name="Mastrian S.D."/>
            <person name="Matthies H.J."/>
            <person name="Hao J."/>
            <person name="Ramos H."/>
            <person name="Acharya C.R."/>
            <person name="Conrad A.L."/>
            <person name="Taylor H.L."/>
            <person name="Dejesa L.C."/>
            <person name="Shah M.K."/>
            <person name="O'Huallachain M.E."/>
            <person name="Lince M.T."/>
            <person name="Blankenship R.E."/>
            <person name="Beatty J.T."/>
            <person name="Touchman J.W."/>
        </authorList>
    </citation>
    <scope>NUCLEOTIDE SEQUENCE [LARGE SCALE GENOMIC DNA]</scope>
    <source>
        <strain>ATCC 33942 / OCh 114</strain>
    </source>
</reference>
<keyword id="KW-0012">Acyltransferase</keyword>
<keyword id="KW-0028">Amino-acid biosynthesis</keyword>
<keyword id="KW-0963">Cytoplasm</keyword>
<keyword id="KW-0220">Diaminopimelate biosynthesis</keyword>
<keyword id="KW-0457">Lysine biosynthesis</keyword>
<keyword id="KW-1185">Reference proteome</keyword>
<keyword id="KW-0677">Repeat</keyword>
<keyword id="KW-0808">Transferase</keyword>
<gene>
    <name evidence="1" type="primary">dapD</name>
    <name type="ordered locus">RD1_0189</name>
</gene>
<dbReference type="EC" id="2.3.1.117" evidence="1"/>
<dbReference type="EMBL" id="CP000362">
    <property type="protein sequence ID" value="ABG29918.1"/>
    <property type="molecule type" value="Genomic_DNA"/>
</dbReference>
<dbReference type="RefSeq" id="WP_011566540.1">
    <property type="nucleotide sequence ID" value="NC_008209.1"/>
</dbReference>
<dbReference type="SMR" id="Q16DM5"/>
<dbReference type="STRING" id="375451.RD1_0189"/>
<dbReference type="KEGG" id="rde:RD1_0189"/>
<dbReference type="eggNOG" id="COG2171">
    <property type="taxonomic scope" value="Bacteria"/>
</dbReference>
<dbReference type="HOGENOM" id="CLU_050859_0_1_5"/>
<dbReference type="OrthoDB" id="9775362at2"/>
<dbReference type="UniPathway" id="UPA00034">
    <property type="reaction ID" value="UER00019"/>
</dbReference>
<dbReference type="Proteomes" id="UP000007029">
    <property type="component" value="Chromosome"/>
</dbReference>
<dbReference type="GO" id="GO:0005737">
    <property type="term" value="C:cytoplasm"/>
    <property type="evidence" value="ECO:0007669"/>
    <property type="project" value="UniProtKB-SubCell"/>
</dbReference>
<dbReference type="GO" id="GO:0008666">
    <property type="term" value="F:2,3,4,5-tetrahydropyridine-2,6-dicarboxylate N-succinyltransferase activity"/>
    <property type="evidence" value="ECO:0007669"/>
    <property type="project" value="UniProtKB-UniRule"/>
</dbReference>
<dbReference type="GO" id="GO:0016779">
    <property type="term" value="F:nucleotidyltransferase activity"/>
    <property type="evidence" value="ECO:0007669"/>
    <property type="project" value="TreeGrafter"/>
</dbReference>
<dbReference type="GO" id="GO:0019877">
    <property type="term" value="P:diaminopimelate biosynthetic process"/>
    <property type="evidence" value="ECO:0007669"/>
    <property type="project" value="UniProtKB-UniRule"/>
</dbReference>
<dbReference type="GO" id="GO:0009089">
    <property type="term" value="P:lysine biosynthetic process via diaminopimelate"/>
    <property type="evidence" value="ECO:0007669"/>
    <property type="project" value="UniProtKB-UniRule"/>
</dbReference>
<dbReference type="CDD" id="cd03350">
    <property type="entry name" value="LbH_THP_succinylT"/>
    <property type="match status" value="1"/>
</dbReference>
<dbReference type="Gene3D" id="2.160.10.10">
    <property type="entry name" value="Hexapeptide repeat proteins"/>
    <property type="match status" value="1"/>
</dbReference>
<dbReference type="Gene3D" id="1.10.166.10">
    <property type="entry name" value="Tetrahydrodipicolinate-N-succinyltransferase, N-terminal domain"/>
    <property type="match status" value="1"/>
</dbReference>
<dbReference type="HAMAP" id="MF_00811">
    <property type="entry name" value="DapD"/>
    <property type="match status" value="1"/>
</dbReference>
<dbReference type="InterPro" id="IPR005664">
    <property type="entry name" value="DapD_Trfase_Hexpep_rpt_fam"/>
</dbReference>
<dbReference type="InterPro" id="IPR001451">
    <property type="entry name" value="Hexapep"/>
</dbReference>
<dbReference type="InterPro" id="IPR018357">
    <property type="entry name" value="Hexapep_transf_CS"/>
</dbReference>
<dbReference type="InterPro" id="IPR023180">
    <property type="entry name" value="THP_succinylTrfase_dom1"/>
</dbReference>
<dbReference type="InterPro" id="IPR037133">
    <property type="entry name" value="THP_succinylTrfase_N_sf"/>
</dbReference>
<dbReference type="InterPro" id="IPR011004">
    <property type="entry name" value="Trimer_LpxA-like_sf"/>
</dbReference>
<dbReference type="NCBIfam" id="TIGR00965">
    <property type="entry name" value="dapD"/>
    <property type="match status" value="1"/>
</dbReference>
<dbReference type="NCBIfam" id="NF008808">
    <property type="entry name" value="PRK11830.1"/>
    <property type="match status" value="1"/>
</dbReference>
<dbReference type="PANTHER" id="PTHR19136:SF52">
    <property type="entry name" value="2,3,4,5-TETRAHYDROPYRIDINE-2,6-DICARBOXYLATE N-SUCCINYLTRANSFERASE"/>
    <property type="match status" value="1"/>
</dbReference>
<dbReference type="PANTHER" id="PTHR19136">
    <property type="entry name" value="MOLYBDENUM COFACTOR GUANYLYLTRANSFERASE"/>
    <property type="match status" value="1"/>
</dbReference>
<dbReference type="Pfam" id="PF14602">
    <property type="entry name" value="Hexapep_2"/>
    <property type="match status" value="1"/>
</dbReference>
<dbReference type="Pfam" id="PF14805">
    <property type="entry name" value="THDPS_N_2"/>
    <property type="match status" value="1"/>
</dbReference>
<dbReference type="SUPFAM" id="SSF51161">
    <property type="entry name" value="Trimeric LpxA-like enzymes"/>
    <property type="match status" value="1"/>
</dbReference>
<dbReference type="PROSITE" id="PS00101">
    <property type="entry name" value="HEXAPEP_TRANSFERASES"/>
    <property type="match status" value="1"/>
</dbReference>